<name>ATPA_ESCF3</name>
<feature type="chain" id="PRO_1000143382" description="ATP synthase subunit alpha">
    <location>
        <begin position="1"/>
        <end position="513"/>
    </location>
</feature>
<feature type="binding site" evidence="1">
    <location>
        <begin position="169"/>
        <end position="176"/>
    </location>
    <ligand>
        <name>ATP</name>
        <dbReference type="ChEBI" id="CHEBI:30616"/>
    </ligand>
</feature>
<feature type="site" description="Required for activity" evidence="1">
    <location>
        <position position="373"/>
    </location>
</feature>
<evidence type="ECO:0000255" key="1">
    <source>
        <dbReference type="HAMAP-Rule" id="MF_01346"/>
    </source>
</evidence>
<proteinExistence type="inferred from homology"/>
<comment type="function">
    <text evidence="1">Produces ATP from ADP in the presence of a proton gradient across the membrane. The alpha chain is a regulatory subunit.</text>
</comment>
<comment type="catalytic activity">
    <reaction evidence="1">
        <text>ATP + H2O + 4 H(+)(in) = ADP + phosphate + 5 H(+)(out)</text>
        <dbReference type="Rhea" id="RHEA:57720"/>
        <dbReference type="ChEBI" id="CHEBI:15377"/>
        <dbReference type="ChEBI" id="CHEBI:15378"/>
        <dbReference type="ChEBI" id="CHEBI:30616"/>
        <dbReference type="ChEBI" id="CHEBI:43474"/>
        <dbReference type="ChEBI" id="CHEBI:456216"/>
        <dbReference type="EC" id="7.1.2.2"/>
    </reaction>
</comment>
<comment type="subunit">
    <text evidence="1">F-type ATPases have 2 components, CF(1) - the catalytic core - and CF(0) - the membrane proton channel. CF(1) has five subunits: alpha(3), beta(3), gamma(1), delta(1), epsilon(1). CF(0) has three main subunits: a(1), b(2) and c(9-12). The alpha and beta chains form an alternating ring which encloses part of the gamma chain. CF(1) is attached to CF(0) by a central stalk formed by the gamma and epsilon chains, while a peripheral stalk is formed by the delta and b chains.</text>
</comment>
<comment type="subcellular location">
    <subcellularLocation>
        <location evidence="1">Cell inner membrane</location>
        <topology evidence="1">Peripheral membrane protein</topology>
    </subcellularLocation>
</comment>
<comment type="similarity">
    <text evidence="1">Belongs to the ATPase alpha/beta chains family.</text>
</comment>
<protein>
    <recommendedName>
        <fullName evidence="1">ATP synthase subunit alpha</fullName>
        <ecNumber evidence="1">7.1.2.2</ecNumber>
    </recommendedName>
    <alternativeName>
        <fullName evidence="1">ATP synthase F1 sector subunit alpha</fullName>
    </alternativeName>
    <alternativeName>
        <fullName evidence="1">F-ATPase subunit alpha</fullName>
    </alternativeName>
</protein>
<sequence length="513" mass="55222">MQLNSTEISELIKQRIAQFNVVSEAHNEGTIVSVSDGVIRIHGLADCMQGEMISLPGNRYAIALNLERDSVGAVVMGPYADLAEGMKVKCTGRILEVPVGRGLLGRVVNTLGAPIDGKGPLDHDGFSAVEAIAPGVIERQSVDQPVQTGYKAVDSMIPIGRGQRELIIGDRQTGKTALAIDAIINQRDSGIKCIYVAIGQKASTISNVVRKLEEHGALANTIVVVATASESAALQYLAPYAGCAMGEYFRDRGEDALIIYDDLSKQAVAYRQISLLLRRPPGREAFPGDVFYLHSRLLERAARVNAEYVEAFTKGEVKGKTGSLTALPIIETQAGDVSAFVPTNVISITDGQIFLETNLFNAGIRPAVNPGISVSRVGGAAQTKIMKKLSGGIRTALAQYRELAAFSQFASDLDDATRKQLDHGQKVTELLKQKQYAPMSVAQQSLVLFAAERGYLADVELSKIGSFEAALLAYVDRDHAPLMQEINQTGGYNDEIEGKLKGILDSFKATQSW</sequence>
<reference key="1">
    <citation type="journal article" date="2009" name="PLoS Genet.">
        <title>Organised genome dynamics in the Escherichia coli species results in highly diverse adaptive paths.</title>
        <authorList>
            <person name="Touchon M."/>
            <person name="Hoede C."/>
            <person name="Tenaillon O."/>
            <person name="Barbe V."/>
            <person name="Baeriswyl S."/>
            <person name="Bidet P."/>
            <person name="Bingen E."/>
            <person name="Bonacorsi S."/>
            <person name="Bouchier C."/>
            <person name="Bouvet O."/>
            <person name="Calteau A."/>
            <person name="Chiapello H."/>
            <person name="Clermont O."/>
            <person name="Cruveiller S."/>
            <person name="Danchin A."/>
            <person name="Diard M."/>
            <person name="Dossat C."/>
            <person name="Karoui M.E."/>
            <person name="Frapy E."/>
            <person name="Garry L."/>
            <person name="Ghigo J.M."/>
            <person name="Gilles A.M."/>
            <person name="Johnson J."/>
            <person name="Le Bouguenec C."/>
            <person name="Lescat M."/>
            <person name="Mangenot S."/>
            <person name="Martinez-Jehanne V."/>
            <person name="Matic I."/>
            <person name="Nassif X."/>
            <person name="Oztas S."/>
            <person name="Petit M.A."/>
            <person name="Pichon C."/>
            <person name="Rouy Z."/>
            <person name="Ruf C.S."/>
            <person name="Schneider D."/>
            <person name="Tourret J."/>
            <person name="Vacherie B."/>
            <person name="Vallenet D."/>
            <person name="Medigue C."/>
            <person name="Rocha E.P.C."/>
            <person name="Denamur E."/>
        </authorList>
    </citation>
    <scope>NUCLEOTIDE SEQUENCE [LARGE SCALE GENOMIC DNA]</scope>
    <source>
        <strain>ATCC 35469 / DSM 13698 / BCRC 15582 / CCUG 18766 / IAM 14443 / JCM 21226 / LMG 7866 / NBRC 102419 / NCTC 12128 / CDC 0568-73</strain>
    </source>
</reference>
<accession>B7LK79</accession>
<gene>
    <name evidence="1" type="primary">atpA</name>
    <name type="ordered locus">EFER_4033</name>
</gene>
<dbReference type="EC" id="7.1.2.2" evidence="1"/>
<dbReference type="EMBL" id="CU928158">
    <property type="protein sequence ID" value="CAQ91467.1"/>
    <property type="molecule type" value="Genomic_DNA"/>
</dbReference>
<dbReference type="RefSeq" id="WP_001176745.1">
    <property type="nucleotide sequence ID" value="NC_011740.1"/>
</dbReference>
<dbReference type="SMR" id="B7LK79"/>
<dbReference type="GeneID" id="93778233"/>
<dbReference type="KEGG" id="efe:EFER_4033"/>
<dbReference type="HOGENOM" id="CLU_010091_2_1_6"/>
<dbReference type="OrthoDB" id="9803053at2"/>
<dbReference type="Proteomes" id="UP000000745">
    <property type="component" value="Chromosome"/>
</dbReference>
<dbReference type="GO" id="GO:0005886">
    <property type="term" value="C:plasma membrane"/>
    <property type="evidence" value="ECO:0007669"/>
    <property type="project" value="UniProtKB-SubCell"/>
</dbReference>
<dbReference type="GO" id="GO:0045259">
    <property type="term" value="C:proton-transporting ATP synthase complex"/>
    <property type="evidence" value="ECO:0007669"/>
    <property type="project" value="UniProtKB-KW"/>
</dbReference>
<dbReference type="GO" id="GO:0043531">
    <property type="term" value="F:ADP binding"/>
    <property type="evidence" value="ECO:0007669"/>
    <property type="project" value="TreeGrafter"/>
</dbReference>
<dbReference type="GO" id="GO:0005524">
    <property type="term" value="F:ATP binding"/>
    <property type="evidence" value="ECO:0007669"/>
    <property type="project" value="UniProtKB-UniRule"/>
</dbReference>
<dbReference type="GO" id="GO:0046933">
    <property type="term" value="F:proton-transporting ATP synthase activity, rotational mechanism"/>
    <property type="evidence" value="ECO:0007669"/>
    <property type="project" value="UniProtKB-UniRule"/>
</dbReference>
<dbReference type="CDD" id="cd18113">
    <property type="entry name" value="ATP-synt_F1_alpha_C"/>
    <property type="match status" value="1"/>
</dbReference>
<dbReference type="CDD" id="cd18116">
    <property type="entry name" value="ATP-synt_F1_alpha_N"/>
    <property type="match status" value="1"/>
</dbReference>
<dbReference type="CDD" id="cd01132">
    <property type="entry name" value="F1-ATPase_alpha_CD"/>
    <property type="match status" value="1"/>
</dbReference>
<dbReference type="FunFam" id="1.20.150.20:FF:000001">
    <property type="entry name" value="ATP synthase subunit alpha"/>
    <property type="match status" value="1"/>
</dbReference>
<dbReference type="FunFam" id="2.40.30.20:FF:000001">
    <property type="entry name" value="ATP synthase subunit alpha"/>
    <property type="match status" value="1"/>
</dbReference>
<dbReference type="FunFam" id="3.40.50.300:FF:000002">
    <property type="entry name" value="ATP synthase subunit alpha"/>
    <property type="match status" value="1"/>
</dbReference>
<dbReference type="Gene3D" id="2.40.30.20">
    <property type="match status" value="1"/>
</dbReference>
<dbReference type="Gene3D" id="1.20.150.20">
    <property type="entry name" value="ATP synthase alpha/beta chain, C-terminal domain"/>
    <property type="match status" value="1"/>
</dbReference>
<dbReference type="Gene3D" id="3.40.50.300">
    <property type="entry name" value="P-loop containing nucleotide triphosphate hydrolases"/>
    <property type="match status" value="1"/>
</dbReference>
<dbReference type="HAMAP" id="MF_01346">
    <property type="entry name" value="ATP_synth_alpha_bact"/>
    <property type="match status" value="1"/>
</dbReference>
<dbReference type="InterPro" id="IPR023366">
    <property type="entry name" value="ATP_synth_asu-like_sf"/>
</dbReference>
<dbReference type="InterPro" id="IPR000793">
    <property type="entry name" value="ATP_synth_asu_C"/>
</dbReference>
<dbReference type="InterPro" id="IPR038376">
    <property type="entry name" value="ATP_synth_asu_C_sf"/>
</dbReference>
<dbReference type="InterPro" id="IPR033732">
    <property type="entry name" value="ATP_synth_F1_a_nt-bd_dom"/>
</dbReference>
<dbReference type="InterPro" id="IPR005294">
    <property type="entry name" value="ATP_synth_F1_asu"/>
</dbReference>
<dbReference type="InterPro" id="IPR020003">
    <property type="entry name" value="ATPase_a/bsu_AS"/>
</dbReference>
<dbReference type="InterPro" id="IPR004100">
    <property type="entry name" value="ATPase_F1/V1/A1_a/bsu_N"/>
</dbReference>
<dbReference type="InterPro" id="IPR036121">
    <property type="entry name" value="ATPase_F1/V1/A1_a/bsu_N_sf"/>
</dbReference>
<dbReference type="InterPro" id="IPR000194">
    <property type="entry name" value="ATPase_F1/V1/A1_a/bsu_nucl-bd"/>
</dbReference>
<dbReference type="InterPro" id="IPR027417">
    <property type="entry name" value="P-loop_NTPase"/>
</dbReference>
<dbReference type="NCBIfam" id="TIGR00962">
    <property type="entry name" value="atpA"/>
    <property type="match status" value="1"/>
</dbReference>
<dbReference type="NCBIfam" id="NF009884">
    <property type="entry name" value="PRK13343.1"/>
    <property type="match status" value="1"/>
</dbReference>
<dbReference type="PANTHER" id="PTHR48082">
    <property type="entry name" value="ATP SYNTHASE SUBUNIT ALPHA, MITOCHONDRIAL"/>
    <property type="match status" value="1"/>
</dbReference>
<dbReference type="PANTHER" id="PTHR48082:SF2">
    <property type="entry name" value="ATP SYNTHASE SUBUNIT ALPHA, MITOCHONDRIAL"/>
    <property type="match status" value="1"/>
</dbReference>
<dbReference type="Pfam" id="PF00006">
    <property type="entry name" value="ATP-synt_ab"/>
    <property type="match status" value="1"/>
</dbReference>
<dbReference type="Pfam" id="PF00306">
    <property type="entry name" value="ATP-synt_ab_C"/>
    <property type="match status" value="1"/>
</dbReference>
<dbReference type="Pfam" id="PF02874">
    <property type="entry name" value="ATP-synt_ab_N"/>
    <property type="match status" value="1"/>
</dbReference>
<dbReference type="SUPFAM" id="SSF47917">
    <property type="entry name" value="C-terminal domain of alpha and beta subunits of F1 ATP synthase"/>
    <property type="match status" value="1"/>
</dbReference>
<dbReference type="SUPFAM" id="SSF50615">
    <property type="entry name" value="N-terminal domain of alpha and beta subunits of F1 ATP synthase"/>
    <property type="match status" value="1"/>
</dbReference>
<dbReference type="SUPFAM" id="SSF52540">
    <property type="entry name" value="P-loop containing nucleoside triphosphate hydrolases"/>
    <property type="match status" value="1"/>
</dbReference>
<dbReference type="PROSITE" id="PS00152">
    <property type="entry name" value="ATPASE_ALPHA_BETA"/>
    <property type="match status" value="1"/>
</dbReference>
<keyword id="KW-0066">ATP synthesis</keyword>
<keyword id="KW-0067">ATP-binding</keyword>
<keyword id="KW-0997">Cell inner membrane</keyword>
<keyword id="KW-1003">Cell membrane</keyword>
<keyword id="KW-0139">CF(1)</keyword>
<keyword id="KW-0375">Hydrogen ion transport</keyword>
<keyword id="KW-0406">Ion transport</keyword>
<keyword id="KW-0472">Membrane</keyword>
<keyword id="KW-0547">Nucleotide-binding</keyword>
<keyword id="KW-1278">Translocase</keyword>
<keyword id="KW-0813">Transport</keyword>
<organism>
    <name type="scientific">Escherichia fergusonii (strain ATCC 35469 / DSM 13698 / CCUG 18766 / IAM 14443 / JCM 21226 / LMG 7866 / NBRC 102419 / NCTC 12128 / CDC 0568-73)</name>
    <dbReference type="NCBI Taxonomy" id="585054"/>
    <lineage>
        <taxon>Bacteria</taxon>
        <taxon>Pseudomonadati</taxon>
        <taxon>Pseudomonadota</taxon>
        <taxon>Gammaproteobacteria</taxon>
        <taxon>Enterobacterales</taxon>
        <taxon>Enterobacteriaceae</taxon>
        <taxon>Escherichia</taxon>
    </lineage>
</organism>